<sequence>MTMITDSLAVVLQRRDWENPGVTQLNRLAAHPPFASWRNSEEARTDRPSQQLRSLNGEWRFAWFPAPEAVPESWLECDLPDADTIVVPSNWQMHGYDAPIYTNVTYPITVNPPFVPVENPTGCYSLTFNVDESWLQEGQTRIIFDGVNSAFHLWCNGRWVGYGQDSRLPSEFDLSAFLRAGENRLAVMVLRWSDGSYLEDQDMWRMSGIFRDVSLLHKPTTQISDFHVATRFNDDFSRAVLEAEVQMCGELRDELRVTVSLWQGETQVASGTTPFGGEIIDERGGYADRVTLRLNVENPALWSAEIPNLYRAVVKLHTADGTLIEAEACDVGFREVRIENGLLLLNGKPLLIRGVNRHEHHPLHGQVMDEQTMVQDILLMKQNNFNAVRCSHYPNHPLWYTLCDRYGLYVVDEANIETHGMVPMNRLTDDPRWLPAMSERVTRMVQRDRNHPSVIIWSLGNESGHGANHDALYRWIKSVDPSRPVQYEGGGADTSATDIICPMYARVDEDQPFPAVPKWSIKKWLSLPGELRPLILCEYAHAMGNSLGGFAKYWQAFRQYPRLQGGFVWDWVDQSLIKYDENGNPWSAYGGDFGDTPNDRQFCMNGLVFADRTPHPALTEAKHQQQFFQFRLSGRTIEVTSEYLFRHSDNELLHWTVALDGKPLASGEVPLDVAPQGKQVIELPVLPQPESTGQLWLTVHVVQPNATAWSEAGHISAWHQWRLAENLSVTLPAASHSIPHLTTSEMDFCIELGNKRWQFNRQSGFLSQMWIGDEKQLLTPLRAQFTRAPLDNDIGVSEATRIDPNAWVERWKAAGHYQAEAALLQCTADTLADAVLITTAHAWQHQGKTLFISRKTYRIDGSGQMAITVDVEVASDTPHPARIGLTCQLAQVAERVNWLGLGPQENYPDRLTAACFDRWDLPLSDMYTPYVFPSENGLRCGTRELNYGPHQWRGDFQFNISRYSQQQLMETSHRHLLHAEEGTWLNIDGFHMGIGGDDSWSPSVSAEFQLSAGRYHYQLVWCQK</sequence>
<feature type="chain" id="PRO_1000215918" description="Beta-galactosidase">
    <location>
        <begin position="1"/>
        <end position="1024"/>
    </location>
</feature>
<feature type="active site" description="Proton donor" evidence="1">
    <location>
        <position position="462"/>
    </location>
</feature>
<feature type="active site" description="Nucleophile" evidence="1">
    <location>
        <position position="538"/>
    </location>
</feature>
<feature type="binding site" evidence="1">
    <location>
        <position position="103"/>
    </location>
    <ligand>
        <name>substrate</name>
    </ligand>
</feature>
<feature type="binding site" evidence="1">
    <location>
        <position position="202"/>
    </location>
    <ligand>
        <name>Na(+)</name>
        <dbReference type="ChEBI" id="CHEBI:29101"/>
    </ligand>
</feature>
<feature type="binding site" evidence="1">
    <location>
        <position position="202"/>
    </location>
    <ligand>
        <name>substrate</name>
    </ligand>
</feature>
<feature type="binding site" evidence="1">
    <location>
        <position position="417"/>
    </location>
    <ligand>
        <name>Mg(2+)</name>
        <dbReference type="ChEBI" id="CHEBI:18420"/>
        <label>1</label>
    </ligand>
</feature>
<feature type="binding site" evidence="1">
    <location>
        <position position="419"/>
    </location>
    <ligand>
        <name>Mg(2+)</name>
        <dbReference type="ChEBI" id="CHEBI:18420"/>
        <label>1</label>
    </ligand>
</feature>
<feature type="binding site" evidence="1">
    <location>
        <position position="462"/>
    </location>
    <ligand>
        <name>Mg(2+)</name>
        <dbReference type="ChEBI" id="CHEBI:18420"/>
        <label>1</label>
    </ligand>
</feature>
<feature type="binding site" evidence="1">
    <location>
        <position position="462"/>
    </location>
    <ligand>
        <name>substrate</name>
    </ligand>
</feature>
<feature type="binding site" evidence="1">
    <location>
        <begin position="538"/>
        <end position="541"/>
    </location>
    <ligand>
        <name>substrate</name>
    </ligand>
</feature>
<feature type="binding site" evidence="1">
    <location>
        <position position="598"/>
    </location>
    <ligand>
        <name>Mg(2+)</name>
        <dbReference type="ChEBI" id="CHEBI:18420"/>
        <label>2</label>
    </ligand>
</feature>
<feature type="binding site" evidence="1">
    <location>
        <position position="602"/>
    </location>
    <ligand>
        <name>Na(+)</name>
        <dbReference type="ChEBI" id="CHEBI:29101"/>
    </ligand>
</feature>
<feature type="binding site" evidence="1">
    <location>
        <position position="605"/>
    </location>
    <ligand>
        <name>Na(+)</name>
        <dbReference type="ChEBI" id="CHEBI:29101"/>
    </ligand>
</feature>
<feature type="binding site" evidence="1">
    <location>
        <position position="605"/>
    </location>
    <ligand>
        <name>substrate</name>
    </ligand>
</feature>
<feature type="binding site" evidence="1">
    <location>
        <position position="1000"/>
    </location>
    <ligand>
        <name>substrate</name>
    </ligand>
</feature>
<feature type="site" description="Transition state stabilizer" evidence="1">
    <location>
        <position position="358"/>
    </location>
</feature>
<feature type="site" description="Transition state stabilizer" evidence="1">
    <location>
        <position position="392"/>
    </location>
</feature>
<gene>
    <name evidence="1" type="primary">lacZ</name>
    <name type="ordered locus">ECUMN_0387</name>
</gene>
<organism>
    <name type="scientific">Escherichia coli O17:K52:H18 (strain UMN026 / ExPEC)</name>
    <dbReference type="NCBI Taxonomy" id="585056"/>
    <lineage>
        <taxon>Bacteria</taxon>
        <taxon>Pseudomonadati</taxon>
        <taxon>Pseudomonadota</taxon>
        <taxon>Gammaproteobacteria</taxon>
        <taxon>Enterobacterales</taxon>
        <taxon>Enterobacteriaceae</taxon>
        <taxon>Escherichia</taxon>
    </lineage>
</organism>
<reference key="1">
    <citation type="journal article" date="2009" name="PLoS Genet.">
        <title>Organised genome dynamics in the Escherichia coli species results in highly diverse adaptive paths.</title>
        <authorList>
            <person name="Touchon M."/>
            <person name="Hoede C."/>
            <person name="Tenaillon O."/>
            <person name="Barbe V."/>
            <person name="Baeriswyl S."/>
            <person name="Bidet P."/>
            <person name="Bingen E."/>
            <person name="Bonacorsi S."/>
            <person name="Bouchier C."/>
            <person name="Bouvet O."/>
            <person name="Calteau A."/>
            <person name="Chiapello H."/>
            <person name="Clermont O."/>
            <person name="Cruveiller S."/>
            <person name="Danchin A."/>
            <person name="Diard M."/>
            <person name="Dossat C."/>
            <person name="Karoui M.E."/>
            <person name="Frapy E."/>
            <person name="Garry L."/>
            <person name="Ghigo J.M."/>
            <person name="Gilles A.M."/>
            <person name="Johnson J."/>
            <person name="Le Bouguenec C."/>
            <person name="Lescat M."/>
            <person name="Mangenot S."/>
            <person name="Martinez-Jehanne V."/>
            <person name="Matic I."/>
            <person name="Nassif X."/>
            <person name="Oztas S."/>
            <person name="Petit M.A."/>
            <person name="Pichon C."/>
            <person name="Rouy Z."/>
            <person name="Ruf C.S."/>
            <person name="Schneider D."/>
            <person name="Tourret J."/>
            <person name="Vacherie B."/>
            <person name="Vallenet D."/>
            <person name="Medigue C."/>
            <person name="Rocha E.P.C."/>
            <person name="Denamur E."/>
        </authorList>
    </citation>
    <scope>NUCLEOTIDE SEQUENCE [LARGE SCALE GENOMIC DNA]</scope>
    <source>
        <strain>UMN026 / ExPEC</strain>
    </source>
</reference>
<evidence type="ECO:0000255" key="1">
    <source>
        <dbReference type="HAMAP-Rule" id="MF_01687"/>
    </source>
</evidence>
<name>BGAL_ECOLU</name>
<dbReference type="EC" id="3.2.1.23" evidence="1"/>
<dbReference type="EMBL" id="CU928163">
    <property type="protein sequence ID" value="CAR11602.1"/>
    <property type="molecule type" value="Genomic_DNA"/>
</dbReference>
<dbReference type="RefSeq" id="WP_000177868.1">
    <property type="nucleotide sequence ID" value="NC_011751.1"/>
</dbReference>
<dbReference type="RefSeq" id="YP_002411150.1">
    <property type="nucleotide sequence ID" value="NC_011751.1"/>
</dbReference>
<dbReference type="SMR" id="B7N8Q1"/>
<dbReference type="STRING" id="585056.ECUMN_0387"/>
<dbReference type="CAZy" id="GH2">
    <property type="family name" value="Glycoside Hydrolase Family 2"/>
</dbReference>
<dbReference type="KEGG" id="eum:ECUMN_0387"/>
<dbReference type="PATRIC" id="fig|585056.7.peg.585"/>
<dbReference type="HOGENOM" id="CLU_002346_0_2_6"/>
<dbReference type="Proteomes" id="UP000007097">
    <property type="component" value="Chromosome"/>
</dbReference>
<dbReference type="GO" id="GO:0009341">
    <property type="term" value="C:beta-galactosidase complex"/>
    <property type="evidence" value="ECO:0007669"/>
    <property type="project" value="InterPro"/>
</dbReference>
<dbReference type="GO" id="GO:0004565">
    <property type="term" value="F:beta-galactosidase activity"/>
    <property type="evidence" value="ECO:0007669"/>
    <property type="project" value="UniProtKB-EC"/>
</dbReference>
<dbReference type="GO" id="GO:0030246">
    <property type="term" value="F:carbohydrate binding"/>
    <property type="evidence" value="ECO:0007669"/>
    <property type="project" value="InterPro"/>
</dbReference>
<dbReference type="GO" id="GO:0000287">
    <property type="term" value="F:magnesium ion binding"/>
    <property type="evidence" value="ECO:0007669"/>
    <property type="project" value="UniProtKB-UniRule"/>
</dbReference>
<dbReference type="GO" id="GO:0005990">
    <property type="term" value="P:lactose catabolic process"/>
    <property type="evidence" value="ECO:0007669"/>
    <property type="project" value="TreeGrafter"/>
</dbReference>
<dbReference type="FunFam" id="2.60.120.260:FF:000058">
    <property type="entry name" value="Beta-galactosidase"/>
    <property type="match status" value="1"/>
</dbReference>
<dbReference type="FunFam" id="2.60.40.10:FF:000680">
    <property type="entry name" value="Beta-galactosidase"/>
    <property type="match status" value="1"/>
</dbReference>
<dbReference type="FunFam" id="2.60.40.10:FF:000850">
    <property type="entry name" value="Beta-galactosidase"/>
    <property type="match status" value="1"/>
</dbReference>
<dbReference type="FunFam" id="2.70.98.10:FF:000006">
    <property type="entry name" value="Beta-galactosidase"/>
    <property type="match status" value="1"/>
</dbReference>
<dbReference type="FunFam" id="3.20.20.80:FF:000018">
    <property type="entry name" value="Beta-galactosidase"/>
    <property type="match status" value="1"/>
</dbReference>
<dbReference type="Gene3D" id="2.70.98.10">
    <property type="match status" value="1"/>
</dbReference>
<dbReference type="Gene3D" id="2.60.120.260">
    <property type="entry name" value="Galactose-binding domain-like"/>
    <property type="match status" value="1"/>
</dbReference>
<dbReference type="Gene3D" id="3.20.20.80">
    <property type="entry name" value="Glycosidases"/>
    <property type="match status" value="1"/>
</dbReference>
<dbReference type="Gene3D" id="2.60.40.10">
    <property type="entry name" value="Immunoglobulins"/>
    <property type="match status" value="2"/>
</dbReference>
<dbReference type="HAMAP" id="MF_01687">
    <property type="entry name" value="Beta_gal"/>
    <property type="match status" value="1"/>
</dbReference>
<dbReference type="InterPro" id="IPR004199">
    <property type="entry name" value="B-gal_small/dom_5"/>
</dbReference>
<dbReference type="InterPro" id="IPR050347">
    <property type="entry name" value="Bact_Beta-galactosidase"/>
</dbReference>
<dbReference type="InterPro" id="IPR036156">
    <property type="entry name" value="Beta-gal/glucu_dom_sf"/>
</dbReference>
<dbReference type="InterPro" id="IPR011013">
    <property type="entry name" value="Gal_mutarotase_sf_dom"/>
</dbReference>
<dbReference type="InterPro" id="IPR008979">
    <property type="entry name" value="Galactose-bd-like_sf"/>
</dbReference>
<dbReference type="InterPro" id="IPR014718">
    <property type="entry name" value="GH-type_carb-bd"/>
</dbReference>
<dbReference type="InterPro" id="IPR006101">
    <property type="entry name" value="Glyco_hydro_2"/>
</dbReference>
<dbReference type="InterPro" id="IPR023232">
    <property type="entry name" value="Glyco_hydro_2_AS"/>
</dbReference>
<dbReference type="InterPro" id="IPR023933">
    <property type="entry name" value="Glyco_hydro_2_beta_Galsidase"/>
</dbReference>
<dbReference type="InterPro" id="IPR006103">
    <property type="entry name" value="Glyco_hydro_2_cat"/>
</dbReference>
<dbReference type="InterPro" id="IPR023230">
    <property type="entry name" value="Glyco_hydro_2_CS"/>
</dbReference>
<dbReference type="InterPro" id="IPR006102">
    <property type="entry name" value="Glyco_hydro_2_Ig-like"/>
</dbReference>
<dbReference type="InterPro" id="IPR006104">
    <property type="entry name" value="Glyco_hydro_2_N"/>
</dbReference>
<dbReference type="InterPro" id="IPR017853">
    <property type="entry name" value="Glycoside_hydrolase_SF"/>
</dbReference>
<dbReference type="InterPro" id="IPR013783">
    <property type="entry name" value="Ig-like_fold"/>
</dbReference>
<dbReference type="InterPro" id="IPR032312">
    <property type="entry name" value="LacZ_4"/>
</dbReference>
<dbReference type="NCBIfam" id="NF007074">
    <property type="entry name" value="PRK09525.1"/>
    <property type="match status" value="1"/>
</dbReference>
<dbReference type="PANTHER" id="PTHR46323">
    <property type="entry name" value="BETA-GALACTOSIDASE"/>
    <property type="match status" value="1"/>
</dbReference>
<dbReference type="PANTHER" id="PTHR46323:SF2">
    <property type="entry name" value="BETA-GALACTOSIDASE"/>
    <property type="match status" value="1"/>
</dbReference>
<dbReference type="Pfam" id="PF02929">
    <property type="entry name" value="Bgal_small_N"/>
    <property type="match status" value="1"/>
</dbReference>
<dbReference type="Pfam" id="PF00703">
    <property type="entry name" value="Glyco_hydro_2"/>
    <property type="match status" value="1"/>
</dbReference>
<dbReference type="Pfam" id="PF02836">
    <property type="entry name" value="Glyco_hydro_2_C"/>
    <property type="match status" value="1"/>
</dbReference>
<dbReference type="Pfam" id="PF02837">
    <property type="entry name" value="Glyco_hydro_2_N"/>
    <property type="match status" value="1"/>
</dbReference>
<dbReference type="Pfam" id="PF16353">
    <property type="entry name" value="LacZ_4"/>
    <property type="match status" value="1"/>
</dbReference>
<dbReference type="PRINTS" id="PR00132">
    <property type="entry name" value="GLHYDRLASE2"/>
</dbReference>
<dbReference type="SMART" id="SM01038">
    <property type="entry name" value="Bgal_small_N"/>
    <property type="match status" value="1"/>
</dbReference>
<dbReference type="SUPFAM" id="SSF51445">
    <property type="entry name" value="(Trans)glycosidases"/>
    <property type="match status" value="1"/>
</dbReference>
<dbReference type="SUPFAM" id="SSF49303">
    <property type="entry name" value="beta-Galactosidase/glucuronidase domain"/>
    <property type="match status" value="2"/>
</dbReference>
<dbReference type="SUPFAM" id="SSF74650">
    <property type="entry name" value="Galactose mutarotase-like"/>
    <property type="match status" value="1"/>
</dbReference>
<dbReference type="SUPFAM" id="SSF49785">
    <property type="entry name" value="Galactose-binding domain-like"/>
    <property type="match status" value="1"/>
</dbReference>
<dbReference type="PROSITE" id="PS00719">
    <property type="entry name" value="GLYCOSYL_HYDROL_F2_1"/>
    <property type="match status" value="1"/>
</dbReference>
<dbReference type="PROSITE" id="PS00608">
    <property type="entry name" value="GLYCOSYL_HYDROL_F2_2"/>
    <property type="match status" value="1"/>
</dbReference>
<accession>B7N8Q1</accession>
<comment type="catalytic activity">
    <reaction evidence="1">
        <text>Hydrolysis of terminal non-reducing beta-D-galactose residues in beta-D-galactosides.</text>
        <dbReference type="EC" id="3.2.1.23"/>
    </reaction>
</comment>
<comment type="cofactor">
    <cofactor evidence="1">
        <name>Mg(2+)</name>
        <dbReference type="ChEBI" id="CHEBI:18420"/>
    </cofactor>
    <text evidence="1">Binds 2 magnesium ions per monomer.</text>
</comment>
<comment type="cofactor">
    <cofactor evidence="1">
        <name>Na(+)</name>
        <dbReference type="ChEBI" id="CHEBI:29101"/>
    </cofactor>
    <text evidence="1">Binds 1 sodium ion per monomer.</text>
</comment>
<comment type="subunit">
    <text evidence="1">Homotetramer.</text>
</comment>
<comment type="similarity">
    <text evidence="1">Belongs to the glycosyl hydrolase 2 family.</text>
</comment>
<proteinExistence type="inferred from homology"/>
<protein>
    <recommendedName>
        <fullName evidence="1">Beta-galactosidase</fullName>
        <shortName evidence="1">Beta-gal</shortName>
        <ecNumber evidence="1">3.2.1.23</ecNumber>
    </recommendedName>
    <alternativeName>
        <fullName evidence="1">Lactase</fullName>
    </alternativeName>
</protein>
<keyword id="KW-0326">Glycosidase</keyword>
<keyword id="KW-0378">Hydrolase</keyword>
<keyword id="KW-0460">Magnesium</keyword>
<keyword id="KW-0479">Metal-binding</keyword>
<keyword id="KW-0915">Sodium</keyword>